<proteinExistence type="inferred from homology"/>
<protein>
    <recommendedName>
        <fullName>UPF0758 protein CLB_3028</fullName>
    </recommendedName>
</protein>
<keyword id="KW-0378">Hydrolase</keyword>
<keyword id="KW-0479">Metal-binding</keyword>
<keyword id="KW-0482">Metalloprotease</keyword>
<keyword id="KW-0645">Protease</keyword>
<keyword id="KW-0862">Zinc</keyword>
<evidence type="ECO:0000255" key="1">
    <source>
        <dbReference type="PROSITE-ProRule" id="PRU01182"/>
    </source>
</evidence>
<evidence type="ECO:0000305" key="2"/>
<sequence>MDNNFKIKDLPKNERPQERLIRYGAEVLSNSELLAVILRTGTKNQNIMMLASSLIKETGGLDQLFNQSIEELTKIKGIGVTKAVQILALSELSKRFKTYKSGNEYKISTPLDVSNLVMEDMKYLKQEKLKILILNTKNIVTYIRDVFIGTLNSSIVHPREIFCEAIKKNGASIIICHNHPSGDPTPSKEDINITLRLKECGKLIGIDLLDHIIIGENKYVSMKEKGTI</sequence>
<dbReference type="EMBL" id="CP000726">
    <property type="protein sequence ID" value="ABS35087.1"/>
    <property type="molecule type" value="Genomic_DNA"/>
</dbReference>
<dbReference type="SMR" id="A7FXW3"/>
<dbReference type="KEGG" id="cba:CLB_3028"/>
<dbReference type="HOGENOM" id="CLU_073529_0_2_9"/>
<dbReference type="GO" id="GO:0046872">
    <property type="term" value="F:metal ion binding"/>
    <property type="evidence" value="ECO:0007669"/>
    <property type="project" value="UniProtKB-KW"/>
</dbReference>
<dbReference type="GO" id="GO:0008237">
    <property type="term" value="F:metallopeptidase activity"/>
    <property type="evidence" value="ECO:0007669"/>
    <property type="project" value="UniProtKB-KW"/>
</dbReference>
<dbReference type="GO" id="GO:0006508">
    <property type="term" value="P:proteolysis"/>
    <property type="evidence" value="ECO:0007669"/>
    <property type="project" value="UniProtKB-KW"/>
</dbReference>
<dbReference type="CDD" id="cd08071">
    <property type="entry name" value="MPN_DUF2466"/>
    <property type="match status" value="1"/>
</dbReference>
<dbReference type="Gene3D" id="1.10.150.20">
    <property type="entry name" value="5' to 3' exonuclease, C-terminal subdomain"/>
    <property type="match status" value="1"/>
</dbReference>
<dbReference type="Gene3D" id="3.40.140.10">
    <property type="entry name" value="Cytidine Deaminase, domain 2"/>
    <property type="match status" value="1"/>
</dbReference>
<dbReference type="InterPro" id="IPR037518">
    <property type="entry name" value="MPN"/>
</dbReference>
<dbReference type="InterPro" id="IPR025657">
    <property type="entry name" value="RadC_JAB"/>
</dbReference>
<dbReference type="InterPro" id="IPR010994">
    <property type="entry name" value="RuvA_2-like"/>
</dbReference>
<dbReference type="InterPro" id="IPR001405">
    <property type="entry name" value="UPF0758"/>
</dbReference>
<dbReference type="InterPro" id="IPR020891">
    <property type="entry name" value="UPF0758_CS"/>
</dbReference>
<dbReference type="InterPro" id="IPR046778">
    <property type="entry name" value="UPF0758_N"/>
</dbReference>
<dbReference type="NCBIfam" id="NF000642">
    <property type="entry name" value="PRK00024.1"/>
    <property type="match status" value="1"/>
</dbReference>
<dbReference type="NCBIfam" id="TIGR00608">
    <property type="entry name" value="radc"/>
    <property type="match status" value="1"/>
</dbReference>
<dbReference type="PANTHER" id="PTHR30471">
    <property type="entry name" value="DNA REPAIR PROTEIN RADC"/>
    <property type="match status" value="1"/>
</dbReference>
<dbReference type="PANTHER" id="PTHR30471:SF3">
    <property type="entry name" value="UPF0758 PROTEIN YEES-RELATED"/>
    <property type="match status" value="1"/>
</dbReference>
<dbReference type="Pfam" id="PF04002">
    <property type="entry name" value="RadC"/>
    <property type="match status" value="1"/>
</dbReference>
<dbReference type="Pfam" id="PF20582">
    <property type="entry name" value="UPF0758_N"/>
    <property type="match status" value="1"/>
</dbReference>
<dbReference type="SUPFAM" id="SSF102712">
    <property type="entry name" value="JAB1/MPN domain"/>
    <property type="match status" value="1"/>
</dbReference>
<dbReference type="SUPFAM" id="SSF47781">
    <property type="entry name" value="RuvA domain 2-like"/>
    <property type="match status" value="1"/>
</dbReference>
<dbReference type="PROSITE" id="PS50249">
    <property type="entry name" value="MPN"/>
    <property type="match status" value="1"/>
</dbReference>
<dbReference type="PROSITE" id="PS01302">
    <property type="entry name" value="UPF0758"/>
    <property type="match status" value="1"/>
</dbReference>
<gene>
    <name type="ordered locus">CLB_3028</name>
</gene>
<reference key="1">
    <citation type="journal article" date="2007" name="PLoS ONE">
        <title>Analysis of the neurotoxin complex genes in Clostridium botulinum A1-A4 and B1 strains: BoNT/A3, /Ba4 and /B1 clusters are located within plasmids.</title>
        <authorList>
            <person name="Smith T.J."/>
            <person name="Hill K.K."/>
            <person name="Foley B.T."/>
            <person name="Detter J.C."/>
            <person name="Munk A.C."/>
            <person name="Bruce D.C."/>
            <person name="Doggett N.A."/>
            <person name="Smith L.A."/>
            <person name="Marks J.D."/>
            <person name="Xie G."/>
            <person name="Brettin T.S."/>
        </authorList>
    </citation>
    <scope>NUCLEOTIDE SEQUENCE [LARGE SCALE GENOMIC DNA]</scope>
    <source>
        <strain>ATCC 19397 / Type A</strain>
    </source>
</reference>
<name>Y3028_CLOB1</name>
<organism>
    <name type="scientific">Clostridium botulinum (strain ATCC 19397 / Type A)</name>
    <dbReference type="NCBI Taxonomy" id="441770"/>
    <lineage>
        <taxon>Bacteria</taxon>
        <taxon>Bacillati</taxon>
        <taxon>Bacillota</taxon>
        <taxon>Clostridia</taxon>
        <taxon>Eubacteriales</taxon>
        <taxon>Clostridiaceae</taxon>
        <taxon>Clostridium</taxon>
    </lineage>
</organism>
<feature type="chain" id="PRO_1000001650" description="UPF0758 protein CLB_3028">
    <location>
        <begin position="1"/>
        <end position="228"/>
    </location>
</feature>
<feature type="domain" description="MPN" evidence="1">
    <location>
        <begin position="106"/>
        <end position="228"/>
    </location>
</feature>
<feature type="short sequence motif" description="JAMM motif" evidence="1">
    <location>
        <begin position="177"/>
        <end position="190"/>
    </location>
</feature>
<feature type="binding site" evidence="1">
    <location>
        <position position="177"/>
    </location>
    <ligand>
        <name>Zn(2+)</name>
        <dbReference type="ChEBI" id="CHEBI:29105"/>
        <note>catalytic</note>
    </ligand>
</feature>
<feature type="binding site" evidence="1">
    <location>
        <position position="179"/>
    </location>
    <ligand>
        <name>Zn(2+)</name>
        <dbReference type="ChEBI" id="CHEBI:29105"/>
        <note>catalytic</note>
    </ligand>
</feature>
<feature type="binding site" evidence="1">
    <location>
        <position position="190"/>
    </location>
    <ligand>
        <name>Zn(2+)</name>
        <dbReference type="ChEBI" id="CHEBI:29105"/>
        <note>catalytic</note>
    </ligand>
</feature>
<comment type="similarity">
    <text evidence="2">Belongs to the UPF0758 family.</text>
</comment>
<accession>A7FXW3</accession>